<protein>
    <recommendedName>
        <fullName evidence="1">Probable alpha-L-glutamate ligase</fullName>
        <ecNumber evidence="1">6.3.2.-</ecNumber>
    </recommendedName>
</protein>
<keyword id="KW-0067">ATP-binding</keyword>
<keyword id="KW-0436">Ligase</keyword>
<keyword id="KW-0460">Magnesium</keyword>
<keyword id="KW-0464">Manganese</keyword>
<keyword id="KW-0479">Metal-binding</keyword>
<keyword id="KW-0547">Nucleotide-binding</keyword>
<keyword id="KW-0648">Protein biosynthesis</keyword>
<proteinExistence type="inferred from homology"/>
<name>RIMK_VIBVU</name>
<evidence type="ECO:0000255" key="1">
    <source>
        <dbReference type="HAMAP-Rule" id="MF_01552"/>
    </source>
</evidence>
<feature type="chain" id="PRO_0000205490" description="Probable alpha-L-glutamate ligase">
    <location>
        <begin position="1"/>
        <end position="301"/>
    </location>
</feature>
<feature type="domain" description="ATP-grasp" evidence="1">
    <location>
        <begin position="104"/>
        <end position="287"/>
    </location>
</feature>
<feature type="binding site" evidence="1">
    <location>
        <position position="141"/>
    </location>
    <ligand>
        <name>ATP</name>
        <dbReference type="ChEBI" id="CHEBI:30616"/>
    </ligand>
</feature>
<feature type="binding site" evidence="1">
    <location>
        <begin position="178"/>
        <end position="179"/>
    </location>
    <ligand>
        <name>ATP</name>
        <dbReference type="ChEBI" id="CHEBI:30616"/>
    </ligand>
</feature>
<feature type="binding site" evidence="1">
    <location>
        <position position="187"/>
    </location>
    <ligand>
        <name>ATP</name>
        <dbReference type="ChEBI" id="CHEBI:30616"/>
    </ligand>
</feature>
<feature type="binding site" evidence="1">
    <location>
        <begin position="211"/>
        <end position="213"/>
    </location>
    <ligand>
        <name>ATP</name>
        <dbReference type="ChEBI" id="CHEBI:30616"/>
    </ligand>
</feature>
<feature type="binding site" evidence="1">
    <location>
        <position position="248"/>
    </location>
    <ligand>
        <name>Mg(2+)</name>
        <dbReference type="ChEBI" id="CHEBI:18420"/>
        <label>1</label>
    </ligand>
</feature>
<feature type="binding site" evidence="1">
    <location>
        <position position="248"/>
    </location>
    <ligand>
        <name>Mn(2+)</name>
        <dbReference type="ChEBI" id="CHEBI:29035"/>
        <label>1</label>
    </ligand>
</feature>
<feature type="binding site" evidence="1">
    <location>
        <position position="260"/>
    </location>
    <ligand>
        <name>Mg(2+)</name>
        <dbReference type="ChEBI" id="CHEBI:18420"/>
        <label>1</label>
    </ligand>
</feature>
<feature type="binding site" evidence="1">
    <location>
        <position position="260"/>
    </location>
    <ligand>
        <name>Mg(2+)</name>
        <dbReference type="ChEBI" id="CHEBI:18420"/>
        <label>2</label>
    </ligand>
</feature>
<feature type="binding site" evidence="1">
    <location>
        <position position="260"/>
    </location>
    <ligand>
        <name>Mn(2+)</name>
        <dbReference type="ChEBI" id="CHEBI:29035"/>
        <label>1</label>
    </ligand>
</feature>
<feature type="binding site" evidence="1">
    <location>
        <position position="260"/>
    </location>
    <ligand>
        <name>Mn(2+)</name>
        <dbReference type="ChEBI" id="CHEBI:29035"/>
        <label>2</label>
    </ligand>
</feature>
<feature type="binding site" evidence="1">
    <location>
        <position position="262"/>
    </location>
    <ligand>
        <name>Mg(2+)</name>
        <dbReference type="ChEBI" id="CHEBI:18420"/>
        <label>2</label>
    </ligand>
</feature>
<feature type="binding site" evidence="1">
    <location>
        <position position="262"/>
    </location>
    <ligand>
        <name>Mn(2+)</name>
        <dbReference type="ChEBI" id="CHEBI:29035"/>
        <label>2</label>
    </ligand>
</feature>
<accession>Q8D5R2</accession>
<dbReference type="EC" id="6.3.2.-" evidence="1"/>
<dbReference type="EMBL" id="AE016796">
    <property type="protein sequence ID" value="AAO07769.1"/>
    <property type="molecule type" value="Genomic_DNA"/>
</dbReference>
<dbReference type="RefSeq" id="WP_011081763.1">
    <property type="nucleotide sequence ID" value="NC_004460.2"/>
</dbReference>
<dbReference type="SMR" id="Q8D5R2"/>
<dbReference type="GeneID" id="93897607"/>
<dbReference type="KEGG" id="vvu:VV2_0846"/>
<dbReference type="HOGENOM" id="CLU_054353_0_1_6"/>
<dbReference type="Proteomes" id="UP000002275">
    <property type="component" value="Chromosome 2"/>
</dbReference>
<dbReference type="GO" id="GO:0005737">
    <property type="term" value="C:cytoplasm"/>
    <property type="evidence" value="ECO:0007669"/>
    <property type="project" value="TreeGrafter"/>
</dbReference>
<dbReference type="GO" id="GO:0005524">
    <property type="term" value="F:ATP binding"/>
    <property type="evidence" value="ECO:0007669"/>
    <property type="project" value="UniProtKB-UniRule"/>
</dbReference>
<dbReference type="GO" id="GO:0046872">
    <property type="term" value="F:metal ion binding"/>
    <property type="evidence" value="ECO:0007669"/>
    <property type="project" value="UniProtKB-KW"/>
</dbReference>
<dbReference type="GO" id="GO:0018169">
    <property type="term" value="F:ribosomal S6-glutamic acid ligase activity"/>
    <property type="evidence" value="ECO:0007669"/>
    <property type="project" value="TreeGrafter"/>
</dbReference>
<dbReference type="GO" id="GO:0036211">
    <property type="term" value="P:protein modification process"/>
    <property type="evidence" value="ECO:0007669"/>
    <property type="project" value="InterPro"/>
</dbReference>
<dbReference type="GO" id="GO:0009432">
    <property type="term" value="P:SOS response"/>
    <property type="evidence" value="ECO:0007669"/>
    <property type="project" value="TreeGrafter"/>
</dbReference>
<dbReference type="GO" id="GO:0006412">
    <property type="term" value="P:translation"/>
    <property type="evidence" value="ECO:0007669"/>
    <property type="project" value="UniProtKB-KW"/>
</dbReference>
<dbReference type="FunFam" id="3.30.470.20:FF:000058">
    <property type="entry name" value="Alpha-aminoadipate--LysW ligase LysX protein"/>
    <property type="match status" value="1"/>
</dbReference>
<dbReference type="FunFam" id="3.40.50.20:FF:000004">
    <property type="entry name" value="Probable alpha-L-glutamate ligase"/>
    <property type="match status" value="1"/>
</dbReference>
<dbReference type="FunFam" id="3.30.1490.20:FF:000005">
    <property type="entry name" value="Probable alpha-L-glutamate ligase 1"/>
    <property type="match status" value="1"/>
</dbReference>
<dbReference type="Gene3D" id="3.40.50.20">
    <property type="match status" value="1"/>
</dbReference>
<dbReference type="Gene3D" id="3.30.1490.20">
    <property type="entry name" value="ATP-grasp fold, A domain"/>
    <property type="match status" value="1"/>
</dbReference>
<dbReference type="Gene3D" id="3.30.470.20">
    <property type="entry name" value="ATP-grasp fold, B domain"/>
    <property type="match status" value="1"/>
</dbReference>
<dbReference type="HAMAP" id="MF_01552">
    <property type="entry name" value="RimK"/>
    <property type="match status" value="1"/>
</dbReference>
<dbReference type="InterPro" id="IPR011761">
    <property type="entry name" value="ATP-grasp"/>
</dbReference>
<dbReference type="InterPro" id="IPR013651">
    <property type="entry name" value="ATP-grasp_RimK-type"/>
</dbReference>
<dbReference type="InterPro" id="IPR013815">
    <property type="entry name" value="ATP_grasp_subdomain_1"/>
</dbReference>
<dbReference type="InterPro" id="IPR023533">
    <property type="entry name" value="RimK"/>
</dbReference>
<dbReference type="InterPro" id="IPR041107">
    <property type="entry name" value="Rimk_N"/>
</dbReference>
<dbReference type="InterPro" id="IPR004666">
    <property type="entry name" value="Rp_bS6_RimK/Lys_biosynth_LsyX"/>
</dbReference>
<dbReference type="NCBIfam" id="NF007764">
    <property type="entry name" value="PRK10446.1"/>
    <property type="match status" value="1"/>
</dbReference>
<dbReference type="NCBIfam" id="TIGR00768">
    <property type="entry name" value="rimK_fam"/>
    <property type="match status" value="1"/>
</dbReference>
<dbReference type="PANTHER" id="PTHR21621:SF7">
    <property type="entry name" value="RIBOSOMAL PROTEIN BS6--L-GLUTAMATE LIGASE"/>
    <property type="match status" value="1"/>
</dbReference>
<dbReference type="PANTHER" id="PTHR21621">
    <property type="entry name" value="RIBOSOMAL PROTEIN S6 MODIFICATION PROTEIN"/>
    <property type="match status" value="1"/>
</dbReference>
<dbReference type="Pfam" id="PF08443">
    <property type="entry name" value="RimK"/>
    <property type="match status" value="1"/>
</dbReference>
<dbReference type="Pfam" id="PF18030">
    <property type="entry name" value="Rimk_N"/>
    <property type="match status" value="1"/>
</dbReference>
<dbReference type="SUPFAM" id="SSF56059">
    <property type="entry name" value="Glutathione synthetase ATP-binding domain-like"/>
    <property type="match status" value="1"/>
</dbReference>
<dbReference type="PROSITE" id="PS50975">
    <property type="entry name" value="ATP_GRASP"/>
    <property type="match status" value="1"/>
</dbReference>
<comment type="cofactor">
    <cofactor evidence="1">
        <name>Mg(2+)</name>
        <dbReference type="ChEBI" id="CHEBI:18420"/>
    </cofactor>
    <cofactor evidence="1">
        <name>Mn(2+)</name>
        <dbReference type="ChEBI" id="CHEBI:29035"/>
    </cofactor>
    <text evidence="1">Binds 2 magnesium or manganese ions per subunit.</text>
</comment>
<comment type="similarity">
    <text evidence="1">Belongs to the RimK family.</text>
</comment>
<gene>
    <name evidence="1" type="primary">rimK</name>
    <name type="ordered locus">VV2_0846</name>
</gene>
<organism>
    <name type="scientific">Vibrio vulnificus (strain CMCP6)</name>
    <dbReference type="NCBI Taxonomy" id="216895"/>
    <lineage>
        <taxon>Bacteria</taxon>
        <taxon>Pseudomonadati</taxon>
        <taxon>Pseudomonadota</taxon>
        <taxon>Gammaproteobacteria</taxon>
        <taxon>Vibrionales</taxon>
        <taxon>Vibrionaceae</taxon>
        <taxon>Vibrio</taxon>
    </lineage>
</organism>
<reference key="1">
    <citation type="submission" date="2002-12" db="EMBL/GenBank/DDBJ databases">
        <title>Complete genome sequence of Vibrio vulnificus CMCP6.</title>
        <authorList>
            <person name="Rhee J.H."/>
            <person name="Kim S.Y."/>
            <person name="Chung S.S."/>
            <person name="Kim J.J."/>
            <person name="Moon Y.H."/>
            <person name="Jeong H."/>
            <person name="Choy H.E."/>
        </authorList>
    </citation>
    <scope>NUCLEOTIDE SEQUENCE [LARGE SCALE GENOMIC DNA]</scope>
    <source>
        <strain>CMCP6</strain>
    </source>
</reference>
<sequence>MRIAILSRNENLYSTMRLKQAGEARGHEVDVIDTLHCYMDITSNNPKIRYKGEELPQYDAIIPRIGASVTFYGTAVVRQFEMMGTFVVNESVAISRSRDKLRSLQLLSRKGIGLPRTGFAHHPDNIQDVIRNVGGAPLVIKLLEGTQGIGVVLAETNKAAESVIEAFMGLKANIMVQEFIEEAKGADIRCFVVGNKVIAAMKRQAKEGEFRSNLHRGGSAQLVRLSKEERATAINAAKVMGLNLCGVDILQSKNGPVVMEVNSSPGLEGIEQATNKDVAGMIYEFIEKNAKPNSNRTKGRG</sequence>